<organism>
    <name type="scientific">Shewanella baltica (strain OS195)</name>
    <dbReference type="NCBI Taxonomy" id="399599"/>
    <lineage>
        <taxon>Bacteria</taxon>
        <taxon>Pseudomonadati</taxon>
        <taxon>Pseudomonadota</taxon>
        <taxon>Gammaproteobacteria</taxon>
        <taxon>Alteromonadales</taxon>
        <taxon>Shewanellaceae</taxon>
        <taxon>Shewanella</taxon>
    </lineage>
</organism>
<feature type="chain" id="PRO_1000074560" description="Phospho-N-acetylmuramoyl-pentapeptide-transferase">
    <location>
        <begin position="1"/>
        <end position="360"/>
    </location>
</feature>
<feature type="transmembrane region" description="Helical" evidence="1">
    <location>
        <begin position="26"/>
        <end position="46"/>
    </location>
</feature>
<feature type="transmembrane region" description="Helical" evidence="1">
    <location>
        <begin position="74"/>
        <end position="94"/>
    </location>
</feature>
<feature type="transmembrane region" description="Helical" evidence="1">
    <location>
        <begin position="97"/>
        <end position="117"/>
    </location>
</feature>
<feature type="transmembrane region" description="Helical" evidence="1">
    <location>
        <begin position="134"/>
        <end position="154"/>
    </location>
</feature>
<feature type="transmembrane region" description="Helical" evidence="1">
    <location>
        <begin position="168"/>
        <end position="188"/>
    </location>
</feature>
<feature type="transmembrane region" description="Helical" evidence="1">
    <location>
        <begin position="199"/>
        <end position="219"/>
    </location>
</feature>
<feature type="transmembrane region" description="Helical" evidence="1">
    <location>
        <begin position="236"/>
        <end position="256"/>
    </location>
</feature>
<feature type="transmembrane region" description="Helical" evidence="1">
    <location>
        <begin position="263"/>
        <end position="283"/>
    </location>
</feature>
<feature type="transmembrane region" description="Helical" evidence="1">
    <location>
        <begin position="288"/>
        <end position="308"/>
    </location>
</feature>
<feature type="transmembrane region" description="Helical" evidence="1">
    <location>
        <begin position="338"/>
        <end position="358"/>
    </location>
</feature>
<sequence length="360" mass="39704">MLVYLAEYLTRFHTGFNVFSYVTFRAILGLLTALVFSLWFGPKLIERLQLLQIGQVVRNDGPESHFSKRGTPTMGGLLILAAIFISVLLWGDLGSRYVWVMLFVLGSFGLIGFIDDYRKVVRKDTKGLIARWKYILQSLAALLIAFFLYATAANPGETQLVVPFFKDVMPQLGAVFIVLAYFTIVGSSNAVNLTDGLDGLAIMPTVMVAAAFALIAYLSGHAQFANYLHIPHLPGSGELVIVCTAIVGAGLGFLWFNTYPAQVFMGDVGSLSLGAALGTIAVLVRQEILLVIMGGVFVMETLSVILQVGSYKLRGQRIFRMAPIHHHYELKGWPEPRVIVRFWIISIFLVLLGLATLKLR</sequence>
<reference key="1">
    <citation type="submission" date="2007-11" db="EMBL/GenBank/DDBJ databases">
        <title>Complete sequence of chromosome of Shewanella baltica OS195.</title>
        <authorList>
            <consortium name="US DOE Joint Genome Institute"/>
            <person name="Copeland A."/>
            <person name="Lucas S."/>
            <person name="Lapidus A."/>
            <person name="Barry K."/>
            <person name="Glavina del Rio T."/>
            <person name="Dalin E."/>
            <person name="Tice H."/>
            <person name="Pitluck S."/>
            <person name="Chain P."/>
            <person name="Malfatti S."/>
            <person name="Shin M."/>
            <person name="Vergez L."/>
            <person name="Schmutz J."/>
            <person name="Larimer F."/>
            <person name="Land M."/>
            <person name="Hauser L."/>
            <person name="Kyrpides N."/>
            <person name="Kim E."/>
            <person name="Brettar I."/>
            <person name="Rodrigues J."/>
            <person name="Konstantinidis K."/>
            <person name="Klappenbach J."/>
            <person name="Hofle M."/>
            <person name="Tiedje J."/>
            <person name="Richardson P."/>
        </authorList>
    </citation>
    <scope>NUCLEOTIDE SEQUENCE [LARGE SCALE GENOMIC DNA]</scope>
    <source>
        <strain>OS195</strain>
    </source>
</reference>
<evidence type="ECO:0000255" key="1">
    <source>
        <dbReference type="HAMAP-Rule" id="MF_00038"/>
    </source>
</evidence>
<proteinExistence type="inferred from homology"/>
<comment type="function">
    <text evidence="1">Catalyzes the initial step of the lipid cycle reactions in the biosynthesis of the cell wall peptidoglycan: transfers peptidoglycan precursor phospho-MurNAc-pentapeptide from UDP-MurNAc-pentapeptide onto the lipid carrier undecaprenyl phosphate, yielding undecaprenyl-pyrophosphoryl-MurNAc-pentapeptide, known as lipid I.</text>
</comment>
<comment type="catalytic activity">
    <reaction evidence="1">
        <text>UDP-N-acetyl-alpha-D-muramoyl-L-alanyl-gamma-D-glutamyl-meso-2,6-diaminopimeloyl-D-alanyl-D-alanine + di-trans,octa-cis-undecaprenyl phosphate = di-trans,octa-cis-undecaprenyl diphospho-N-acetyl-alpha-D-muramoyl-L-alanyl-D-glutamyl-meso-2,6-diaminopimeloyl-D-alanyl-D-alanine + UMP</text>
        <dbReference type="Rhea" id="RHEA:28386"/>
        <dbReference type="ChEBI" id="CHEBI:57865"/>
        <dbReference type="ChEBI" id="CHEBI:60392"/>
        <dbReference type="ChEBI" id="CHEBI:61386"/>
        <dbReference type="ChEBI" id="CHEBI:61387"/>
        <dbReference type="EC" id="2.7.8.13"/>
    </reaction>
</comment>
<comment type="cofactor">
    <cofactor evidence="1">
        <name>Mg(2+)</name>
        <dbReference type="ChEBI" id="CHEBI:18420"/>
    </cofactor>
</comment>
<comment type="pathway">
    <text evidence="1">Cell wall biogenesis; peptidoglycan biosynthesis.</text>
</comment>
<comment type="subcellular location">
    <subcellularLocation>
        <location evidence="1">Cell inner membrane</location>
        <topology evidence="1">Multi-pass membrane protein</topology>
    </subcellularLocation>
</comment>
<comment type="similarity">
    <text evidence="1">Belongs to the glycosyltransferase 4 family. MraY subfamily.</text>
</comment>
<accession>A9KY26</accession>
<protein>
    <recommendedName>
        <fullName evidence="1">Phospho-N-acetylmuramoyl-pentapeptide-transferase</fullName>
        <ecNumber evidence="1">2.7.8.13</ecNumber>
    </recommendedName>
    <alternativeName>
        <fullName evidence="1">UDP-MurNAc-pentapeptide phosphotransferase</fullName>
    </alternativeName>
</protein>
<dbReference type="EC" id="2.7.8.13" evidence="1"/>
<dbReference type="EMBL" id="CP000891">
    <property type="protein sequence ID" value="ABX47591.1"/>
    <property type="molecule type" value="Genomic_DNA"/>
</dbReference>
<dbReference type="RefSeq" id="WP_006079891.1">
    <property type="nucleotide sequence ID" value="NC_009997.1"/>
</dbReference>
<dbReference type="SMR" id="A9KY26"/>
<dbReference type="GeneID" id="11770748"/>
<dbReference type="KEGG" id="sbn:Sbal195_0410"/>
<dbReference type="HOGENOM" id="CLU_023982_0_0_6"/>
<dbReference type="UniPathway" id="UPA00219"/>
<dbReference type="Proteomes" id="UP000000770">
    <property type="component" value="Chromosome"/>
</dbReference>
<dbReference type="GO" id="GO:0005886">
    <property type="term" value="C:plasma membrane"/>
    <property type="evidence" value="ECO:0007669"/>
    <property type="project" value="UniProtKB-SubCell"/>
</dbReference>
<dbReference type="GO" id="GO:0046872">
    <property type="term" value="F:metal ion binding"/>
    <property type="evidence" value="ECO:0007669"/>
    <property type="project" value="UniProtKB-KW"/>
</dbReference>
<dbReference type="GO" id="GO:0008963">
    <property type="term" value="F:phospho-N-acetylmuramoyl-pentapeptide-transferase activity"/>
    <property type="evidence" value="ECO:0007669"/>
    <property type="project" value="UniProtKB-UniRule"/>
</dbReference>
<dbReference type="GO" id="GO:0051992">
    <property type="term" value="F:UDP-N-acetylmuramoyl-L-alanyl-D-glutamyl-meso-2,6-diaminopimelyl-D-alanyl-D-alanine:undecaprenyl-phosphate transferase activity"/>
    <property type="evidence" value="ECO:0007669"/>
    <property type="project" value="RHEA"/>
</dbReference>
<dbReference type="GO" id="GO:0051301">
    <property type="term" value="P:cell division"/>
    <property type="evidence" value="ECO:0007669"/>
    <property type="project" value="UniProtKB-KW"/>
</dbReference>
<dbReference type="GO" id="GO:0071555">
    <property type="term" value="P:cell wall organization"/>
    <property type="evidence" value="ECO:0007669"/>
    <property type="project" value="UniProtKB-KW"/>
</dbReference>
<dbReference type="GO" id="GO:0009252">
    <property type="term" value="P:peptidoglycan biosynthetic process"/>
    <property type="evidence" value="ECO:0007669"/>
    <property type="project" value="UniProtKB-UniRule"/>
</dbReference>
<dbReference type="GO" id="GO:0008360">
    <property type="term" value="P:regulation of cell shape"/>
    <property type="evidence" value="ECO:0007669"/>
    <property type="project" value="UniProtKB-KW"/>
</dbReference>
<dbReference type="CDD" id="cd06852">
    <property type="entry name" value="GT_MraY"/>
    <property type="match status" value="1"/>
</dbReference>
<dbReference type="HAMAP" id="MF_00038">
    <property type="entry name" value="MraY"/>
    <property type="match status" value="1"/>
</dbReference>
<dbReference type="InterPro" id="IPR000715">
    <property type="entry name" value="Glycosyl_transferase_4"/>
</dbReference>
<dbReference type="InterPro" id="IPR003524">
    <property type="entry name" value="PNAcMuramoyl-5peptid_Trfase"/>
</dbReference>
<dbReference type="InterPro" id="IPR018480">
    <property type="entry name" value="PNAcMuramoyl-5peptid_Trfase_CS"/>
</dbReference>
<dbReference type="NCBIfam" id="TIGR00445">
    <property type="entry name" value="mraY"/>
    <property type="match status" value="1"/>
</dbReference>
<dbReference type="PANTHER" id="PTHR22926">
    <property type="entry name" value="PHOSPHO-N-ACETYLMURAMOYL-PENTAPEPTIDE-TRANSFERASE"/>
    <property type="match status" value="1"/>
</dbReference>
<dbReference type="PANTHER" id="PTHR22926:SF5">
    <property type="entry name" value="PHOSPHO-N-ACETYLMURAMOYL-PENTAPEPTIDE-TRANSFERASE HOMOLOG"/>
    <property type="match status" value="1"/>
</dbReference>
<dbReference type="Pfam" id="PF00953">
    <property type="entry name" value="Glycos_transf_4"/>
    <property type="match status" value="1"/>
</dbReference>
<dbReference type="Pfam" id="PF10555">
    <property type="entry name" value="MraY_sig1"/>
    <property type="match status" value="1"/>
</dbReference>
<dbReference type="PROSITE" id="PS01347">
    <property type="entry name" value="MRAY_1"/>
    <property type="match status" value="1"/>
</dbReference>
<dbReference type="PROSITE" id="PS01348">
    <property type="entry name" value="MRAY_2"/>
    <property type="match status" value="1"/>
</dbReference>
<gene>
    <name evidence="1" type="primary">mraY</name>
    <name type="ordered locus">Sbal195_0410</name>
</gene>
<name>MRAY_SHEB9</name>
<keyword id="KW-0131">Cell cycle</keyword>
<keyword id="KW-0132">Cell division</keyword>
<keyword id="KW-0997">Cell inner membrane</keyword>
<keyword id="KW-1003">Cell membrane</keyword>
<keyword id="KW-0133">Cell shape</keyword>
<keyword id="KW-0961">Cell wall biogenesis/degradation</keyword>
<keyword id="KW-0460">Magnesium</keyword>
<keyword id="KW-0472">Membrane</keyword>
<keyword id="KW-0479">Metal-binding</keyword>
<keyword id="KW-0573">Peptidoglycan synthesis</keyword>
<keyword id="KW-0808">Transferase</keyword>
<keyword id="KW-0812">Transmembrane</keyword>
<keyword id="KW-1133">Transmembrane helix</keyword>